<protein>
    <recommendedName>
        <fullName evidence="1">Large ribosomal subunit protein uL6</fullName>
    </recommendedName>
    <alternativeName>
        <fullName evidence="2">50S ribosomal protein L6</fullName>
    </alternativeName>
</protein>
<comment type="function">
    <text evidence="1">This protein binds to the 23S rRNA, and is important in its secondary structure. It is located near the subunit interface in the base of the L7/L12 stalk, and near the tRNA binding site of the peptidyltransferase center.</text>
</comment>
<comment type="subunit">
    <text evidence="1">Part of the 50S ribosomal subunit.</text>
</comment>
<comment type="similarity">
    <text evidence="1">Belongs to the universal ribosomal protein uL6 family.</text>
</comment>
<dbReference type="EMBL" id="CP000675">
    <property type="protein sequence ID" value="ABQ56899.1"/>
    <property type="molecule type" value="Genomic_DNA"/>
</dbReference>
<dbReference type="RefSeq" id="WP_010946093.1">
    <property type="nucleotide sequence ID" value="NZ_JAPMSS010000006.1"/>
</dbReference>
<dbReference type="SMR" id="A5IHP9"/>
<dbReference type="GeneID" id="57034347"/>
<dbReference type="KEGG" id="lpc:LPC_2998"/>
<dbReference type="HOGENOM" id="CLU_065464_1_2_6"/>
<dbReference type="GO" id="GO:0022625">
    <property type="term" value="C:cytosolic large ribosomal subunit"/>
    <property type="evidence" value="ECO:0007669"/>
    <property type="project" value="TreeGrafter"/>
</dbReference>
<dbReference type="GO" id="GO:0019843">
    <property type="term" value="F:rRNA binding"/>
    <property type="evidence" value="ECO:0007669"/>
    <property type="project" value="UniProtKB-UniRule"/>
</dbReference>
<dbReference type="GO" id="GO:0003735">
    <property type="term" value="F:structural constituent of ribosome"/>
    <property type="evidence" value="ECO:0007669"/>
    <property type="project" value="InterPro"/>
</dbReference>
<dbReference type="GO" id="GO:0002181">
    <property type="term" value="P:cytoplasmic translation"/>
    <property type="evidence" value="ECO:0007669"/>
    <property type="project" value="TreeGrafter"/>
</dbReference>
<dbReference type="FunFam" id="3.90.930.12:FF:000001">
    <property type="entry name" value="50S ribosomal protein L6"/>
    <property type="match status" value="1"/>
</dbReference>
<dbReference type="Gene3D" id="3.90.930.12">
    <property type="entry name" value="Ribosomal protein L6, alpha-beta domain"/>
    <property type="match status" value="2"/>
</dbReference>
<dbReference type="HAMAP" id="MF_01365_B">
    <property type="entry name" value="Ribosomal_uL6_B"/>
    <property type="match status" value="1"/>
</dbReference>
<dbReference type="InterPro" id="IPR000702">
    <property type="entry name" value="Ribosomal_uL6-like"/>
</dbReference>
<dbReference type="InterPro" id="IPR036789">
    <property type="entry name" value="Ribosomal_uL6-like_a/b-dom_sf"/>
</dbReference>
<dbReference type="InterPro" id="IPR020040">
    <property type="entry name" value="Ribosomal_uL6_a/b-dom"/>
</dbReference>
<dbReference type="InterPro" id="IPR019906">
    <property type="entry name" value="Ribosomal_uL6_bac-type"/>
</dbReference>
<dbReference type="InterPro" id="IPR002358">
    <property type="entry name" value="Ribosomal_uL6_CS"/>
</dbReference>
<dbReference type="NCBIfam" id="TIGR03654">
    <property type="entry name" value="L6_bact"/>
    <property type="match status" value="1"/>
</dbReference>
<dbReference type="PANTHER" id="PTHR11655">
    <property type="entry name" value="60S/50S RIBOSOMAL PROTEIN L6/L9"/>
    <property type="match status" value="1"/>
</dbReference>
<dbReference type="PANTHER" id="PTHR11655:SF14">
    <property type="entry name" value="LARGE RIBOSOMAL SUBUNIT PROTEIN UL6M"/>
    <property type="match status" value="1"/>
</dbReference>
<dbReference type="Pfam" id="PF00347">
    <property type="entry name" value="Ribosomal_L6"/>
    <property type="match status" value="2"/>
</dbReference>
<dbReference type="PIRSF" id="PIRSF002162">
    <property type="entry name" value="Ribosomal_L6"/>
    <property type="match status" value="1"/>
</dbReference>
<dbReference type="PRINTS" id="PR00059">
    <property type="entry name" value="RIBOSOMALL6"/>
</dbReference>
<dbReference type="SUPFAM" id="SSF56053">
    <property type="entry name" value="Ribosomal protein L6"/>
    <property type="match status" value="2"/>
</dbReference>
<dbReference type="PROSITE" id="PS00525">
    <property type="entry name" value="RIBOSOMAL_L6_1"/>
    <property type="match status" value="1"/>
</dbReference>
<feature type="chain" id="PRO_1000055251" description="Large ribosomal subunit protein uL6">
    <location>
        <begin position="1"/>
        <end position="179"/>
    </location>
</feature>
<accession>A5IHP9</accession>
<sequence length="179" mass="19432">MSRVAKAPVIHSANVEVTFVDGVITVKGPKGILTQKINKLVNIQHSKESNKLEFSPASNDPMGWAQAGTARALVRNMVQGVTEGYTVTLELVGVGYRAQSKDKSISLSLGYSHSIEYDLPKGVTVETPNNTTILLKGVDKQVLGQIASEIRAFRPPEPYKGKGVKYAGEQIVRKEAKKK</sequence>
<keyword id="KW-0687">Ribonucleoprotein</keyword>
<keyword id="KW-0689">Ribosomal protein</keyword>
<keyword id="KW-0694">RNA-binding</keyword>
<keyword id="KW-0699">rRNA-binding</keyword>
<reference key="1">
    <citation type="submission" date="2006-11" db="EMBL/GenBank/DDBJ databases">
        <title>Identification and characterization of a new conjugation/ type IVA secretion system (trb/tra) of L. pneumophila Corby localized on a mobile genomic island.</title>
        <authorList>
            <person name="Gloeckner G."/>
            <person name="Albert-Weissenberger C."/>
            <person name="Weinmann E."/>
            <person name="Jacobi S."/>
            <person name="Schunder E."/>
            <person name="Steinert M."/>
            <person name="Buchrieser C."/>
            <person name="Hacker J."/>
            <person name="Heuner K."/>
        </authorList>
    </citation>
    <scope>NUCLEOTIDE SEQUENCE [LARGE SCALE GENOMIC DNA]</scope>
    <source>
        <strain>Corby</strain>
    </source>
</reference>
<gene>
    <name evidence="1" type="primary">rplF</name>
    <name type="ordered locus">LPC_2998</name>
</gene>
<name>RL6_LEGPC</name>
<evidence type="ECO:0000255" key="1">
    <source>
        <dbReference type="HAMAP-Rule" id="MF_01365"/>
    </source>
</evidence>
<evidence type="ECO:0000305" key="2"/>
<proteinExistence type="inferred from homology"/>
<organism>
    <name type="scientific">Legionella pneumophila (strain Corby)</name>
    <dbReference type="NCBI Taxonomy" id="400673"/>
    <lineage>
        <taxon>Bacteria</taxon>
        <taxon>Pseudomonadati</taxon>
        <taxon>Pseudomonadota</taxon>
        <taxon>Gammaproteobacteria</taxon>
        <taxon>Legionellales</taxon>
        <taxon>Legionellaceae</taxon>
        <taxon>Legionella</taxon>
    </lineage>
</organism>